<proteinExistence type="inferred from homology"/>
<keyword id="KW-0963">Cytoplasm</keyword>
<keyword id="KW-0489">Methyltransferase</keyword>
<keyword id="KW-0698">rRNA processing</keyword>
<keyword id="KW-0949">S-adenosyl-L-methionine</keyword>
<keyword id="KW-0808">Transferase</keyword>
<dbReference type="EC" id="2.1.1.-" evidence="1"/>
<dbReference type="EMBL" id="CP001407">
    <property type="protein sequence ID" value="ACO29447.1"/>
    <property type="molecule type" value="Genomic_DNA"/>
</dbReference>
<dbReference type="RefSeq" id="WP_001019621.1">
    <property type="nucleotide sequence ID" value="NZ_CP009318.1"/>
</dbReference>
<dbReference type="SMR" id="C1ER75"/>
<dbReference type="GeneID" id="93005640"/>
<dbReference type="KEGG" id="bcx:BCA_5637"/>
<dbReference type="PATRIC" id="fig|572264.18.peg.59"/>
<dbReference type="Proteomes" id="UP000002210">
    <property type="component" value="Chromosome"/>
</dbReference>
<dbReference type="GO" id="GO:0005829">
    <property type="term" value="C:cytosol"/>
    <property type="evidence" value="ECO:0007669"/>
    <property type="project" value="TreeGrafter"/>
</dbReference>
<dbReference type="GO" id="GO:0070043">
    <property type="term" value="F:rRNA (guanine-N7-)-methyltransferase activity"/>
    <property type="evidence" value="ECO:0007669"/>
    <property type="project" value="UniProtKB-UniRule"/>
</dbReference>
<dbReference type="CDD" id="cd02440">
    <property type="entry name" value="AdoMet_MTases"/>
    <property type="match status" value="1"/>
</dbReference>
<dbReference type="FunFam" id="3.40.50.150:FF:000041">
    <property type="entry name" value="Ribosomal RNA small subunit methyltransferase G"/>
    <property type="match status" value="1"/>
</dbReference>
<dbReference type="Gene3D" id="3.40.50.150">
    <property type="entry name" value="Vaccinia Virus protein VP39"/>
    <property type="match status" value="1"/>
</dbReference>
<dbReference type="HAMAP" id="MF_00074">
    <property type="entry name" value="16SrRNA_methyltr_G"/>
    <property type="match status" value="1"/>
</dbReference>
<dbReference type="InterPro" id="IPR003682">
    <property type="entry name" value="rRNA_ssu_MeTfrase_G"/>
</dbReference>
<dbReference type="InterPro" id="IPR029063">
    <property type="entry name" value="SAM-dependent_MTases_sf"/>
</dbReference>
<dbReference type="NCBIfam" id="TIGR00138">
    <property type="entry name" value="rsmG_gidB"/>
    <property type="match status" value="1"/>
</dbReference>
<dbReference type="PANTHER" id="PTHR31760">
    <property type="entry name" value="S-ADENOSYL-L-METHIONINE-DEPENDENT METHYLTRANSFERASES SUPERFAMILY PROTEIN"/>
    <property type="match status" value="1"/>
</dbReference>
<dbReference type="PANTHER" id="PTHR31760:SF0">
    <property type="entry name" value="S-ADENOSYL-L-METHIONINE-DEPENDENT METHYLTRANSFERASES SUPERFAMILY PROTEIN"/>
    <property type="match status" value="1"/>
</dbReference>
<dbReference type="Pfam" id="PF02527">
    <property type="entry name" value="GidB"/>
    <property type="match status" value="1"/>
</dbReference>
<dbReference type="PIRSF" id="PIRSF003078">
    <property type="entry name" value="GidB"/>
    <property type="match status" value="1"/>
</dbReference>
<dbReference type="SUPFAM" id="SSF53335">
    <property type="entry name" value="S-adenosyl-L-methionine-dependent methyltransferases"/>
    <property type="match status" value="1"/>
</dbReference>
<comment type="function">
    <text evidence="1">Specifically methylates the N7 position of guanine in position 535 of 16S rRNA.</text>
</comment>
<comment type="subcellular location">
    <subcellularLocation>
        <location evidence="1">Cytoplasm</location>
    </subcellularLocation>
</comment>
<comment type="similarity">
    <text evidence="1">Belongs to the methyltransferase superfamily. RNA methyltransferase RsmG family.</text>
</comment>
<gene>
    <name evidence="1" type="primary">rsmG</name>
    <name type="ordered locus">BCA_5637</name>
</gene>
<accession>C1ER75</accession>
<name>RSMG_BACC3</name>
<protein>
    <recommendedName>
        <fullName evidence="1">Ribosomal RNA small subunit methyltransferase G</fullName>
        <ecNumber evidence="1">2.1.1.-</ecNumber>
    </recommendedName>
    <alternativeName>
        <fullName evidence="1">16S rRNA 7-methylguanosine methyltransferase</fullName>
        <shortName evidence="1">16S rRNA m7G methyltransferase</shortName>
    </alternativeName>
</protein>
<sequence length="239" mass="27196">MNIEQFQSMLEEKGITLSSRQLEQFEIYFETLVEWNEKMNLTAITEKEEVYLKHFFDSITAAFYYDFSKPFSICDVGAGAGFPSIPLKICFPHLKVTIVDSLQKRINFLNHLAQKLELSDVAFCHDRAETFGKKEGVREAYDIVMARAVARLSVLSELCLPLVKVGGTFIAMKGAAANEEIENGKYALEVLGGDLKEMSTFQLPFEESERNILLIEKKRKTPKKYPRKPGTPNKLPIEK</sequence>
<reference key="1">
    <citation type="submission" date="2009-02" db="EMBL/GenBank/DDBJ databases">
        <title>Genome sequence of Bacillus cereus 03BB102.</title>
        <authorList>
            <person name="Dodson R.J."/>
            <person name="Jackson P."/>
            <person name="Munk A.C."/>
            <person name="Brettin T."/>
            <person name="Bruce D."/>
            <person name="Detter C."/>
            <person name="Tapia R."/>
            <person name="Han C."/>
            <person name="Sutton G."/>
            <person name="Sims D."/>
        </authorList>
    </citation>
    <scope>NUCLEOTIDE SEQUENCE [LARGE SCALE GENOMIC DNA]</scope>
    <source>
        <strain>03BB102</strain>
    </source>
</reference>
<evidence type="ECO:0000255" key="1">
    <source>
        <dbReference type="HAMAP-Rule" id="MF_00074"/>
    </source>
</evidence>
<feature type="chain" id="PRO_1000118175" description="Ribosomal RNA small subunit methyltransferase G">
    <location>
        <begin position="1"/>
        <end position="239"/>
    </location>
</feature>
<feature type="binding site" evidence="1">
    <location>
        <position position="77"/>
    </location>
    <ligand>
        <name>S-adenosyl-L-methionine</name>
        <dbReference type="ChEBI" id="CHEBI:59789"/>
    </ligand>
</feature>
<feature type="binding site" evidence="1">
    <location>
        <position position="82"/>
    </location>
    <ligand>
        <name>S-adenosyl-L-methionine</name>
        <dbReference type="ChEBI" id="CHEBI:59789"/>
    </ligand>
</feature>
<feature type="binding site" evidence="1">
    <location>
        <begin position="128"/>
        <end position="129"/>
    </location>
    <ligand>
        <name>S-adenosyl-L-methionine</name>
        <dbReference type="ChEBI" id="CHEBI:59789"/>
    </ligand>
</feature>
<feature type="binding site" evidence="1">
    <location>
        <position position="147"/>
    </location>
    <ligand>
        <name>S-adenosyl-L-methionine</name>
        <dbReference type="ChEBI" id="CHEBI:59789"/>
    </ligand>
</feature>
<organism>
    <name type="scientific">Bacillus cereus (strain 03BB102)</name>
    <dbReference type="NCBI Taxonomy" id="572264"/>
    <lineage>
        <taxon>Bacteria</taxon>
        <taxon>Bacillati</taxon>
        <taxon>Bacillota</taxon>
        <taxon>Bacilli</taxon>
        <taxon>Bacillales</taxon>
        <taxon>Bacillaceae</taxon>
        <taxon>Bacillus</taxon>
        <taxon>Bacillus cereus group</taxon>
    </lineage>
</organism>